<keyword id="KW-0325">Glycoprotein</keyword>
<keyword id="KW-0378">Hydrolase</keyword>
<keyword id="KW-0645">Protease</keyword>
<keyword id="KW-1185">Reference proteome</keyword>
<keyword id="KW-0964">Secreted</keyword>
<keyword id="KW-0720">Serine protease</keyword>
<keyword id="KW-0732">Signal</keyword>
<keyword id="KW-0843">Virulence</keyword>
<keyword id="KW-0865">Zymogen</keyword>
<organism>
    <name type="scientific">Arthroderma otae (strain ATCC MYA-4605 / CBS 113480)</name>
    <name type="common">Microsporum canis</name>
    <dbReference type="NCBI Taxonomy" id="554155"/>
    <lineage>
        <taxon>Eukaryota</taxon>
        <taxon>Fungi</taxon>
        <taxon>Dikarya</taxon>
        <taxon>Ascomycota</taxon>
        <taxon>Pezizomycotina</taxon>
        <taxon>Eurotiomycetes</taxon>
        <taxon>Eurotiomycetidae</taxon>
        <taxon>Onygenales</taxon>
        <taxon>Arthrodermataceae</taxon>
        <taxon>Microsporum</taxon>
    </lineage>
</organism>
<protein>
    <recommendedName>
        <fullName>Subtilisin-like protease 3</fullName>
        <ecNumber>3.4.21.-</ecNumber>
    </recommendedName>
</protein>
<reference key="1">
    <citation type="journal article" date="2012" name="MBio">
        <title>Comparative genome analysis of Trichophyton rubrum and related dermatophytes reveals candidate genes involved in infection.</title>
        <authorList>
            <person name="Martinez D.A."/>
            <person name="Oliver B.G."/>
            <person name="Graeser Y."/>
            <person name="Goldberg J.M."/>
            <person name="Li W."/>
            <person name="Martinez-Rossi N.M."/>
            <person name="Monod M."/>
            <person name="Shelest E."/>
            <person name="Barton R.C."/>
            <person name="Birch E."/>
            <person name="Brakhage A.A."/>
            <person name="Chen Z."/>
            <person name="Gurr S.J."/>
            <person name="Heiman D."/>
            <person name="Heitman J."/>
            <person name="Kosti I."/>
            <person name="Rossi A."/>
            <person name="Saif S."/>
            <person name="Samalova M."/>
            <person name="Saunders C.W."/>
            <person name="Shea T."/>
            <person name="Summerbell R.C."/>
            <person name="Xu J."/>
            <person name="Young S."/>
            <person name="Zeng Q."/>
            <person name="Birren B.W."/>
            <person name="Cuomo C.A."/>
            <person name="White T.C."/>
        </authorList>
    </citation>
    <scope>NUCLEOTIDE SEQUENCE [LARGE SCALE GENOMIC DNA]</scope>
    <source>
        <strain>ATCC MYA-4605 / CBS 113480</strain>
    </source>
</reference>
<gene>
    <name type="primary">SUB3</name>
    <name type="ORF">MCYG_04040</name>
</gene>
<accession>C5FMY5</accession>
<dbReference type="EC" id="3.4.21.-"/>
<dbReference type="EMBL" id="DS995704">
    <property type="protein sequence ID" value="EEQ31221.1"/>
    <property type="molecule type" value="Genomic_DNA"/>
</dbReference>
<dbReference type="RefSeq" id="XP_002846303.1">
    <property type="nucleotide sequence ID" value="XM_002846257.1"/>
</dbReference>
<dbReference type="SMR" id="C5FMY5"/>
<dbReference type="STRING" id="554155.C5FMY5"/>
<dbReference type="GlyCosmos" id="C5FMY5">
    <property type="glycosylation" value="2 sites, No reported glycans"/>
</dbReference>
<dbReference type="GeneID" id="9224372"/>
<dbReference type="VEuPathDB" id="FungiDB:MCYG_04040"/>
<dbReference type="eggNOG" id="KOG1153">
    <property type="taxonomic scope" value="Eukaryota"/>
</dbReference>
<dbReference type="HOGENOM" id="CLU_011263_1_3_1"/>
<dbReference type="OMA" id="WIAQINE"/>
<dbReference type="OrthoDB" id="206201at2759"/>
<dbReference type="Proteomes" id="UP000002035">
    <property type="component" value="Unassembled WGS sequence"/>
</dbReference>
<dbReference type="GO" id="GO:0005576">
    <property type="term" value="C:extracellular region"/>
    <property type="evidence" value="ECO:0007669"/>
    <property type="project" value="UniProtKB-SubCell"/>
</dbReference>
<dbReference type="GO" id="GO:0004252">
    <property type="term" value="F:serine-type endopeptidase activity"/>
    <property type="evidence" value="ECO:0007669"/>
    <property type="project" value="InterPro"/>
</dbReference>
<dbReference type="GO" id="GO:0006508">
    <property type="term" value="P:proteolysis"/>
    <property type="evidence" value="ECO:0007669"/>
    <property type="project" value="UniProtKB-KW"/>
</dbReference>
<dbReference type="CDD" id="cd04077">
    <property type="entry name" value="Peptidases_S8_PCSK9_ProteinaseK_like"/>
    <property type="match status" value="1"/>
</dbReference>
<dbReference type="FunFam" id="3.40.50.200:FF:000014">
    <property type="entry name" value="Proteinase K"/>
    <property type="match status" value="1"/>
</dbReference>
<dbReference type="Gene3D" id="3.30.70.80">
    <property type="entry name" value="Peptidase S8 propeptide/proteinase inhibitor I9"/>
    <property type="match status" value="1"/>
</dbReference>
<dbReference type="Gene3D" id="3.40.50.200">
    <property type="entry name" value="Peptidase S8/S53 domain"/>
    <property type="match status" value="1"/>
</dbReference>
<dbReference type="InterPro" id="IPR034193">
    <property type="entry name" value="PCSK9_ProteinaseK-like"/>
</dbReference>
<dbReference type="InterPro" id="IPR000209">
    <property type="entry name" value="Peptidase_S8/S53_dom"/>
</dbReference>
<dbReference type="InterPro" id="IPR036852">
    <property type="entry name" value="Peptidase_S8/S53_dom_sf"/>
</dbReference>
<dbReference type="InterPro" id="IPR023828">
    <property type="entry name" value="Peptidase_S8_Ser-AS"/>
</dbReference>
<dbReference type="InterPro" id="IPR050131">
    <property type="entry name" value="Peptidase_S8_subtilisin-like"/>
</dbReference>
<dbReference type="InterPro" id="IPR015500">
    <property type="entry name" value="Peptidase_S8_subtilisin-rel"/>
</dbReference>
<dbReference type="InterPro" id="IPR010259">
    <property type="entry name" value="S8pro/Inhibitor_I9"/>
</dbReference>
<dbReference type="InterPro" id="IPR037045">
    <property type="entry name" value="S8pro/Inhibitor_I9_sf"/>
</dbReference>
<dbReference type="PANTHER" id="PTHR43806:SF11">
    <property type="entry name" value="CEREVISIN-RELATED"/>
    <property type="match status" value="1"/>
</dbReference>
<dbReference type="PANTHER" id="PTHR43806">
    <property type="entry name" value="PEPTIDASE S8"/>
    <property type="match status" value="1"/>
</dbReference>
<dbReference type="Pfam" id="PF05922">
    <property type="entry name" value="Inhibitor_I9"/>
    <property type="match status" value="1"/>
</dbReference>
<dbReference type="Pfam" id="PF00082">
    <property type="entry name" value="Peptidase_S8"/>
    <property type="match status" value="1"/>
</dbReference>
<dbReference type="PRINTS" id="PR00723">
    <property type="entry name" value="SUBTILISIN"/>
</dbReference>
<dbReference type="SUPFAM" id="SSF54897">
    <property type="entry name" value="Protease propeptides/inhibitors"/>
    <property type="match status" value="1"/>
</dbReference>
<dbReference type="SUPFAM" id="SSF52743">
    <property type="entry name" value="Subtilisin-like"/>
    <property type="match status" value="1"/>
</dbReference>
<dbReference type="PROSITE" id="PS51892">
    <property type="entry name" value="SUBTILASE"/>
    <property type="match status" value="1"/>
</dbReference>
<dbReference type="PROSITE" id="PS00138">
    <property type="entry name" value="SUBTILASE_SER"/>
    <property type="match status" value="1"/>
</dbReference>
<feature type="signal peptide" evidence="2">
    <location>
        <begin position="1"/>
        <end position="19"/>
    </location>
</feature>
<feature type="propeptide" id="PRO_0000384067" evidence="1">
    <location>
        <begin position="20"/>
        <end position="116"/>
    </location>
</feature>
<feature type="chain" id="PRO_0000384068" description="Subtilisin-like protease 3">
    <location>
        <begin position="117"/>
        <end position="397"/>
    </location>
</feature>
<feature type="domain" description="Inhibitor I9" evidence="2">
    <location>
        <begin position="35"/>
        <end position="116"/>
    </location>
</feature>
<feature type="domain" description="Peptidase S8" evidence="3">
    <location>
        <begin position="126"/>
        <end position="397"/>
    </location>
</feature>
<feature type="active site" description="Charge relay system" evidence="3">
    <location>
        <position position="158"/>
    </location>
</feature>
<feature type="active site" description="Charge relay system" evidence="3">
    <location>
        <position position="189"/>
    </location>
</feature>
<feature type="active site" description="Charge relay system" evidence="3">
    <location>
        <position position="344"/>
    </location>
</feature>
<feature type="glycosylation site" description="N-linked (GlcNAc...) asparagine" evidence="2">
    <location>
        <position position="250"/>
    </location>
</feature>
<feature type="glycosylation site" description="N-linked (GlcNAc...) asparagine" evidence="2">
    <location>
        <position position="393"/>
    </location>
</feature>
<proteinExistence type="inferred from homology"/>
<sequence>MGCIKVISVFLAAVAAVDARAFFHNRGGNDVIPNSYIVVMKDGVTAEDFDSHISSVATTHSINKAKRGSETVGHKDSFNINGWRAYNGHFDEATIESILNDDKVDYVEHDRVVKLAALTTQPNAPTWGLGRVSHKAPGNKDFVYDSSAGQGVTIYGVDTGIDINHPEFRGRIRWGTNTVDNDNTDGNGHGTHTAGTFAGTTYGVAKKANIVAVKVLSAGGSGSTAGVIKGIDWCVTDAKAKGALGKAALNLSLGGAFSQANNDAVTRAQNAGIFVAVAAGNDNKDAKNSSPASAPAVCTAASSTIDDQKSSFSNWGTIVDIYAPGSNILSAAPGGGTRTLSGTSMASPHVCGVGAAMLAQGVSVAQACDRIKQIANAVIKNPGTGTTNKLLYNGSGR</sequence>
<comment type="function">
    <text evidence="1">Secreted subtilisin-like serine protease with keratinolytic activity that contributes to pathogenicity.</text>
</comment>
<comment type="subcellular location">
    <subcellularLocation>
        <location evidence="1">Secreted</location>
    </subcellularLocation>
</comment>
<comment type="similarity">
    <text evidence="4">Belongs to the peptidase S8 family.</text>
</comment>
<name>SUB3_ARTOC</name>
<evidence type="ECO:0000250" key="1"/>
<evidence type="ECO:0000255" key="2"/>
<evidence type="ECO:0000255" key="3">
    <source>
        <dbReference type="PROSITE-ProRule" id="PRU01240"/>
    </source>
</evidence>
<evidence type="ECO:0000305" key="4"/>